<accession>Q4L6C5</accession>
<sequence>MIKKGTLKYKWMMITTLIMFSTIILFCLVIIFFLKDTLRDGEIDEAEHSSSEIVNLVESRSMNNITTLDLTAMLENFEKAIIYDRNGKQLMQSSNENMINFKPDIDFVDPETIQISKHNGIPYLIITEPIHSERFEGYSVLIHSLEGYNNVVRSLYFVAIAFGLLATFIMAGISYIFSTQLTKPLVTMSNKMIQIRRDGFQNKLELKTNYEETDNLIDTFNDMMYQIEESFNQQRQFVEDASHELRTPLQIIQGHLNLIQRWGKKDPAVLEESLNISLEEMNRITKLVEELLLLTKDKVNIQALEFEEVNINEEIRSRIKSLKQLHPDYQFKTHLSKKPLTLQINRHQFEQLLLIFIDNAMKYDKDNKQIEIATQLRNKQISIEITDHGLGIPKEDQEFIFDRFYRVDKSRSRSQGGNGLGLFIAEKIVQQYGGYITVDSEVNQYTTFKIIFK</sequence>
<organism>
    <name type="scientific">Staphylococcus haemolyticus (strain JCSC1435)</name>
    <dbReference type="NCBI Taxonomy" id="279808"/>
    <lineage>
        <taxon>Bacteria</taxon>
        <taxon>Bacillati</taxon>
        <taxon>Bacillota</taxon>
        <taxon>Bacilli</taxon>
        <taxon>Bacillales</taxon>
        <taxon>Staphylococcaceae</taxon>
        <taxon>Staphylococcus</taxon>
    </lineage>
</organism>
<feature type="chain" id="PRO_0000293451" description="Signal transduction histidine-protein kinase ArlS">
    <location>
        <begin position="1"/>
        <end position="453"/>
    </location>
</feature>
<feature type="transmembrane region" description="Helical" evidence="2">
    <location>
        <begin position="14"/>
        <end position="34"/>
    </location>
</feature>
<feature type="transmembrane region" description="Helical" evidence="2">
    <location>
        <begin position="157"/>
        <end position="177"/>
    </location>
</feature>
<feature type="domain" description="HAMP" evidence="3">
    <location>
        <begin position="179"/>
        <end position="232"/>
    </location>
</feature>
<feature type="domain" description="Histidine kinase" evidence="4">
    <location>
        <begin position="240"/>
        <end position="453"/>
    </location>
</feature>
<feature type="modified residue" description="Phosphohistidine; by autocatalysis" evidence="4">
    <location>
        <position position="243"/>
    </location>
</feature>
<evidence type="ECO:0000250" key="1"/>
<evidence type="ECO:0000255" key="2"/>
<evidence type="ECO:0000255" key="3">
    <source>
        <dbReference type="PROSITE-ProRule" id="PRU00102"/>
    </source>
</evidence>
<evidence type="ECO:0000255" key="4">
    <source>
        <dbReference type="PROSITE-ProRule" id="PRU00107"/>
    </source>
</evidence>
<proteinExistence type="inferred from homology"/>
<name>ARLS_STAHJ</name>
<keyword id="KW-0067">ATP-binding</keyword>
<keyword id="KW-1003">Cell membrane</keyword>
<keyword id="KW-0418">Kinase</keyword>
<keyword id="KW-0472">Membrane</keyword>
<keyword id="KW-0547">Nucleotide-binding</keyword>
<keyword id="KW-0597">Phosphoprotein</keyword>
<keyword id="KW-0808">Transferase</keyword>
<keyword id="KW-0812">Transmembrane</keyword>
<keyword id="KW-1133">Transmembrane helix</keyword>
<keyword id="KW-0902">Two-component regulatory system</keyword>
<dbReference type="EC" id="2.7.13.3"/>
<dbReference type="EMBL" id="AP006716">
    <property type="protein sequence ID" value="BAE04800.1"/>
    <property type="molecule type" value="Genomic_DNA"/>
</dbReference>
<dbReference type="RefSeq" id="WP_011275786.1">
    <property type="nucleotide sequence ID" value="NC_007168.1"/>
</dbReference>
<dbReference type="SMR" id="Q4L6C5"/>
<dbReference type="KEGG" id="sha:SH1491"/>
<dbReference type="eggNOG" id="COG5002">
    <property type="taxonomic scope" value="Bacteria"/>
</dbReference>
<dbReference type="HOGENOM" id="CLU_000445_89_6_9"/>
<dbReference type="OrthoDB" id="9786919at2"/>
<dbReference type="Proteomes" id="UP000000543">
    <property type="component" value="Chromosome"/>
</dbReference>
<dbReference type="GO" id="GO:0005886">
    <property type="term" value="C:plasma membrane"/>
    <property type="evidence" value="ECO:0007669"/>
    <property type="project" value="UniProtKB-SubCell"/>
</dbReference>
<dbReference type="GO" id="GO:0005524">
    <property type="term" value="F:ATP binding"/>
    <property type="evidence" value="ECO:0007669"/>
    <property type="project" value="UniProtKB-KW"/>
</dbReference>
<dbReference type="GO" id="GO:0000155">
    <property type="term" value="F:phosphorelay sensor kinase activity"/>
    <property type="evidence" value="ECO:0007669"/>
    <property type="project" value="InterPro"/>
</dbReference>
<dbReference type="CDD" id="cd00075">
    <property type="entry name" value="HATPase"/>
    <property type="match status" value="1"/>
</dbReference>
<dbReference type="CDD" id="cd00082">
    <property type="entry name" value="HisKA"/>
    <property type="match status" value="1"/>
</dbReference>
<dbReference type="FunFam" id="3.30.565.10:FF:000006">
    <property type="entry name" value="Sensor histidine kinase WalK"/>
    <property type="match status" value="1"/>
</dbReference>
<dbReference type="FunFam" id="1.10.287.130:FF:000001">
    <property type="entry name" value="Two-component sensor histidine kinase"/>
    <property type="match status" value="1"/>
</dbReference>
<dbReference type="Gene3D" id="1.10.287.130">
    <property type="match status" value="1"/>
</dbReference>
<dbReference type="Gene3D" id="6.10.340.10">
    <property type="match status" value="1"/>
</dbReference>
<dbReference type="Gene3D" id="3.30.565.10">
    <property type="entry name" value="Histidine kinase-like ATPase, C-terminal domain"/>
    <property type="match status" value="1"/>
</dbReference>
<dbReference type="InterPro" id="IPR041610">
    <property type="entry name" value="ArlS_N"/>
</dbReference>
<dbReference type="InterPro" id="IPR050398">
    <property type="entry name" value="Bact_Sensor_His_Kinase"/>
</dbReference>
<dbReference type="InterPro" id="IPR003660">
    <property type="entry name" value="HAMP_dom"/>
</dbReference>
<dbReference type="InterPro" id="IPR036890">
    <property type="entry name" value="HATPase_C_sf"/>
</dbReference>
<dbReference type="InterPro" id="IPR005467">
    <property type="entry name" value="His_kinase_dom"/>
</dbReference>
<dbReference type="InterPro" id="IPR003661">
    <property type="entry name" value="HisK_dim/P_dom"/>
</dbReference>
<dbReference type="InterPro" id="IPR036097">
    <property type="entry name" value="HisK_dim/P_sf"/>
</dbReference>
<dbReference type="InterPro" id="IPR004358">
    <property type="entry name" value="Sig_transdc_His_kin-like_C"/>
</dbReference>
<dbReference type="PANTHER" id="PTHR45528:SF12">
    <property type="entry name" value="SENSOR HISTIDINE KINASE ARSS"/>
    <property type="match status" value="1"/>
</dbReference>
<dbReference type="PANTHER" id="PTHR45528">
    <property type="entry name" value="SENSOR HISTIDINE KINASE CPXA"/>
    <property type="match status" value="1"/>
</dbReference>
<dbReference type="Pfam" id="PF18719">
    <property type="entry name" value="ArlS_N"/>
    <property type="match status" value="1"/>
</dbReference>
<dbReference type="Pfam" id="PF02518">
    <property type="entry name" value="HATPase_c"/>
    <property type="match status" value="1"/>
</dbReference>
<dbReference type="Pfam" id="PF00512">
    <property type="entry name" value="HisKA"/>
    <property type="match status" value="1"/>
</dbReference>
<dbReference type="PRINTS" id="PR00344">
    <property type="entry name" value="BCTRLSENSOR"/>
</dbReference>
<dbReference type="SMART" id="SM00387">
    <property type="entry name" value="HATPase_c"/>
    <property type="match status" value="1"/>
</dbReference>
<dbReference type="SMART" id="SM00388">
    <property type="entry name" value="HisKA"/>
    <property type="match status" value="1"/>
</dbReference>
<dbReference type="SUPFAM" id="SSF55874">
    <property type="entry name" value="ATPase domain of HSP90 chaperone/DNA topoisomerase II/histidine kinase"/>
    <property type="match status" value="1"/>
</dbReference>
<dbReference type="SUPFAM" id="SSF47384">
    <property type="entry name" value="Homodimeric domain of signal transducing histidine kinase"/>
    <property type="match status" value="1"/>
</dbReference>
<dbReference type="PROSITE" id="PS50885">
    <property type="entry name" value="HAMP"/>
    <property type="match status" value="1"/>
</dbReference>
<dbReference type="PROSITE" id="PS50109">
    <property type="entry name" value="HIS_KIN"/>
    <property type="match status" value="1"/>
</dbReference>
<reference key="1">
    <citation type="journal article" date="2005" name="J. Bacteriol.">
        <title>Whole-genome sequencing of Staphylococcus haemolyticus uncovers the extreme plasticity of its genome and the evolution of human-colonizing staphylococcal species.</title>
        <authorList>
            <person name="Takeuchi F."/>
            <person name="Watanabe S."/>
            <person name="Baba T."/>
            <person name="Yuzawa H."/>
            <person name="Ito T."/>
            <person name="Morimoto Y."/>
            <person name="Kuroda M."/>
            <person name="Cui L."/>
            <person name="Takahashi M."/>
            <person name="Ankai A."/>
            <person name="Baba S."/>
            <person name="Fukui S."/>
            <person name="Lee J.C."/>
            <person name="Hiramatsu K."/>
        </authorList>
    </citation>
    <scope>NUCLEOTIDE SEQUENCE [LARGE SCALE GENOMIC DNA]</scope>
    <source>
        <strain>JCSC1435</strain>
    </source>
</reference>
<protein>
    <recommendedName>
        <fullName>Signal transduction histidine-protein kinase ArlS</fullName>
        <ecNumber>2.7.13.3</ecNumber>
    </recommendedName>
</protein>
<gene>
    <name type="primary">arlS</name>
    <name type="ordered locus">SH1491</name>
</gene>
<comment type="function">
    <text evidence="1">Member of the two-component regulatory system ArlS/ArlR. ArlS probably functions as a sensor protein kinase which is autophosphorylated at a histidine residue and transfers its phosphate group to ArlR (By similarity).</text>
</comment>
<comment type="catalytic activity">
    <reaction>
        <text>ATP + protein L-histidine = ADP + protein N-phospho-L-histidine.</text>
        <dbReference type="EC" id="2.7.13.3"/>
    </reaction>
</comment>
<comment type="subcellular location">
    <subcellularLocation>
        <location evidence="1">Cell membrane</location>
        <topology evidence="1">Multi-pass membrane protein</topology>
    </subcellularLocation>
</comment>
<comment type="PTM">
    <text evidence="1">Autophosphorylated.</text>
</comment>